<sequence>MDIIQAIIIGIIEGFTEFLPISSTGHMIVASKFLGVAETDLTKAYEVIIQFAAILAVMLIYREKITFKKIDLWMKLLFAFLPLAIVGFIFKDQVKALFNVQVVAWMFIIGGIIFLIVEYYYKEQAWHVKDVEKVSWTQAWWVGFAQIFSLIPGTSRAGATIIGGLLAGLDRKTSAEFSFLLAIPVMAVVSGYDLLKHYQDFADANWGAFLIGFIVAFIVAYATIKLFLVFLQRFTFVAFGIYRIIFGIFLLMIL</sequence>
<dbReference type="EC" id="3.6.1.27" evidence="1"/>
<dbReference type="EMBL" id="AP009179">
    <property type="protein sequence ID" value="BAF72387.1"/>
    <property type="molecule type" value="Genomic_DNA"/>
</dbReference>
<dbReference type="RefSeq" id="WP_011981120.1">
    <property type="nucleotide sequence ID" value="NC_009663.1"/>
</dbReference>
<dbReference type="SMR" id="A6QA78"/>
<dbReference type="STRING" id="387093.SUN_1436"/>
<dbReference type="KEGG" id="sun:SUN_1436"/>
<dbReference type="eggNOG" id="COG1968">
    <property type="taxonomic scope" value="Bacteria"/>
</dbReference>
<dbReference type="HOGENOM" id="CLU_060296_2_0_7"/>
<dbReference type="OrthoDB" id="9808289at2"/>
<dbReference type="Proteomes" id="UP000006378">
    <property type="component" value="Chromosome"/>
</dbReference>
<dbReference type="GO" id="GO:0005886">
    <property type="term" value="C:plasma membrane"/>
    <property type="evidence" value="ECO:0007669"/>
    <property type="project" value="UniProtKB-SubCell"/>
</dbReference>
<dbReference type="GO" id="GO:0050380">
    <property type="term" value="F:undecaprenyl-diphosphatase activity"/>
    <property type="evidence" value="ECO:0007669"/>
    <property type="project" value="UniProtKB-UniRule"/>
</dbReference>
<dbReference type="GO" id="GO:0071555">
    <property type="term" value="P:cell wall organization"/>
    <property type="evidence" value="ECO:0007669"/>
    <property type="project" value="UniProtKB-KW"/>
</dbReference>
<dbReference type="GO" id="GO:0009252">
    <property type="term" value="P:peptidoglycan biosynthetic process"/>
    <property type="evidence" value="ECO:0007669"/>
    <property type="project" value="UniProtKB-KW"/>
</dbReference>
<dbReference type="GO" id="GO:0008360">
    <property type="term" value="P:regulation of cell shape"/>
    <property type="evidence" value="ECO:0007669"/>
    <property type="project" value="UniProtKB-KW"/>
</dbReference>
<dbReference type="GO" id="GO:0046677">
    <property type="term" value="P:response to antibiotic"/>
    <property type="evidence" value="ECO:0007669"/>
    <property type="project" value="UniProtKB-UniRule"/>
</dbReference>
<dbReference type="HAMAP" id="MF_01006">
    <property type="entry name" value="Undec_diphosphatase"/>
    <property type="match status" value="1"/>
</dbReference>
<dbReference type="InterPro" id="IPR003824">
    <property type="entry name" value="UppP"/>
</dbReference>
<dbReference type="NCBIfam" id="NF001389">
    <property type="entry name" value="PRK00281.1-2"/>
    <property type="match status" value="1"/>
</dbReference>
<dbReference type="NCBIfam" id="NF001390">
    <property type="entry name" value="PRK00281.1-4"/>
    <property type="match status" value="1"/>
</dbReference>
<dbReference type="PANTHER" id="PTHR30622">
    <property type="entry name" value="UNDECAPRENYL-DIPHOSPHATASE"/>
    <property type="match status" value="1"/>
</dbReference>
<dbReference type="PANTHER" id="PTHR30622:SF3">
    <property type="entry name" value="UNDECAPRENYL-DIPHOSPHATASE"/>
    <property type="match status" value="1"/>
</dbReference>
<dbReference type="Pfam" id="PF02673">
    <property type="entry name" value="BacA"/>
    <property type="match status" value="1"/>
</dbReference>
<keyword id="KW-0046">Antibiotic resistance</keyword>
<keyword id="KW-0997">Cell inner membrane</keyword>
<keyword id="KW-1003">Cell membrane</keyword>
<keyword id="KW-0133">Cell shape</keyword>
<keyword id="KW-0961">Cell wall biogenesis/degradation</keyword>
<keyword id="KW-0378">Hydrolase</keyword>
<keyword id="KW-0472">Membrane</keyword>
<keyword id="KW-0573">Peptidoglycan synthesis</keyword>
<keyword id="KW-0812">Transmembrane</keyword>
<keyword id="KW-1133">Transmembrane helix</keyword>
<feature type="chain" id="PRO_1000062818" description="Undecaprenyl-diphosphatase">
    <location>
        <begin position="1"/>
        <end position="254"/>
    </location>
</feature>
<feature type="transmembrane region" description="Helical" evidence="1">
    <location>
        <begin position="1"/>
        <end position="21"/>
    </location>
</feature>
<feature type="transmembrane region" description="Helical" evidence="1">
    <location>
        <begin position="41"/>
        <end position="61"/>
    </location>
</feature>
<feature type="transmembrane region" description="Helical" evidence="1">
    <location>
        <begin position="70"/>
        <end position="90"/>
    </location>
</feature>
<feature type="transmembrane region" description="Helical" evidence="1">
    <location>
        <begin position="97"/>
        <end position="117"/>
    </location>
</feature>
<feature type="transmembrane region" description="Helical" evidence="1">
    <location>
        <begin position="134"/>
        <end position="154"/>
    </location>
</feature>
<feature type="transmembrane region" description="Helical" evidence="1">
    <location>
        <begin position="175"/>
        <end position="195"/>
    </location>
</feature>
<feature type="transmembrane region" description="Helical" evidence="1">
    <location>
        <begin position="209"/>
        <end position="229"/>
    </location>
</feature>
<feature type="transmembrane region" description="Helical" evidence="1">
    <location>
        <begin position="234"/>
        <end position="254"/>
    </location>
</feature>
<protein>
    <recommendedName>
        <fullName evidence="1">Undecaprenyl-diphosphatase</fullName>
        <ecNumber evidence="1">3.6.1.27</ecNumber>
    </recommendedName>
    <alternativeName>
        <fullName evidence="1">Bacitracin resistance protein</fullName>
    </alternativeName>
    <alternativeName>
        <fullName evidence="1">Undecaprenyl pyrophosphate phosphatase</fullName>
    </alternativeName>
</protein>
<proteinExistence type="inferred from homology"/>
<comment type="function">
    <text evidence="1">Catalyzes the dephosphorylation of undecaprenyl diphosphate (UPP). Confers resistance to bacitracin.</text>
</comment>
<comment type="catalytic activity">
    <reaction evidence="1">
        <text>di-trans,octa-cis-undecaprenyl diphosphate + H2O = di-trans,octa-cis-undecaprenyl phosphate + phosphate + H(+)</text>
        <dbReference type="Rhea" id="RHEA:28094"/>
        <dbReference type="ChEBI" id="CHEBI:15377"/>
        <dbReference type="ChEBI" id="CHEBI:15378"/>
        <dbReference type="ChEBI" id="CHEBI:43474"/>
        <dbReference type="ChEBI" id="CHEBI:58405"/>
        <dbReference type="ChEBI" id="CHEBI:60392"/>
        <dbReference type="EC" id="3.6.1.27"/>
    </reaction>
</comment>
<comment type="subcellular location">
    <subcellularLocation>
        <location evidence="1">Cell inner membrane</location>
        <topology evidence="1">Multi-pass membrane protein</topology>
    </subcellularLocation>
</comment>
<comment type="miscellaneous">
    <text>Bacitracin is thought to be involved in the inhibition of peptidoglycan synthesis by sequestering undecaprenyl diphosphate, thereby reducing the pool of lipid carrier available.</text>
</comment>
<comment type="similarity">
    <text evidence="1">Belongs to the UppP family.</text>
</comment>
<name>UPPP_SULNB</name>
<gene>
    <name evidence="1" type="primary">uppP</name>
    <name type="ordered locus">SUN_1436</name>
</gene>
<reference key="1">
    <citation type="journal article" date="2007" name="Proc. Natl. Acad. Sci. U.S.A.">
        <title>Deep-sea vent epsilon-proteobacterial genomes provide insights into emergence of pathogens.</title>
        <authorList>
            <person name="Nakagawa S."/>
            <person name="Takaki Y."/>
            <person name="Shimamura S."/>
            <person name="Reysenbach A.-L."/>
            <person name="Takai K."/>
            <person name="Horikoshi K."/>
        </authorList>
    </citation>
    <scope>NUCLEOTIDE SEQUENCE [LARGE SCALE GENOMIC DNA]</scope>
    <source>
        <strain>NBC37-1</strain>
    </source>
</reference>
<accession>A6QA78</accession>
<evidence type="ECO:0000255" key="1">
    <source>
        <dbReference type="HAMAP-Rule" id="MF_01006"/>
    </source>
</evidence>
<organism>
    <name type="scientific">Sulfurovum sp. (strain NBC37-1)</name>
    <dbReference type="NCBI Taxonomy" id="387093"/>
    <lineage>
        <taxon>Bacteria</taxon>
        <taxon>Pseudomonadati</taxon>
        <taxon>Campylobacterota</taxon>
        <taxon>Epsilonproteobacteria</taxon>
        <taxon>Campylobacterales</taxon>
        <taxon>Sulfurovaceae</taxon>
        <taxon>Sulfurovum</taxon>
    </lineage>
</organism>